<reference key="1">
    <citation type="journal article" date="1999" name="Immunity">
        <title>Interleukin-18 binding protein: a novel modulator of the Th1 cytokine response.</title>
        <authorList>
            <person name="Novick D."/>
            <person name="Kim S.-H."/>
            <person name="Fantuzzi G."/>
            <person name="Reznikov L.L."/>
            <person name="Dinarello C.A."/>
            <person name="Rubinstein M."/>
        </authorList>
    </citation>
    <scope>NUCLEOTIDE SEQUENCE [GENOMIC DNA / MRNA] (ISOFORMS A AND B)</scope>
    <scope>PROTEIN SEQUENCE OF 31-70</scope>
    <scope>FUNCTION</scope>
    <scope>ALTERNATIVE SPLICING</scope>
    <scope>TISSUE SPECIFICITY</scope>
</reference>
<reference key="2">
    <citation type="journal article" date="1999" name="FEBS Lett.">
        <title>Cloning and expression of interleukin-18 binding protein.</title>
        <authorList>
            <person name="Aizawa Y."/>
            <person name="Akita K."/>
            <person name="Taniai M."/>
            <person name="Torigoe K."/>
            <person name="Mori T."/>
            <person name="Nishida Y."/>
            <person name="Ushio S."/>
            <person name="Nukada Y."/>
            <person name="Tanimoto T."/>
            <person name="Ikegami H."/>
            <person name="Ikeda M."/>
            <person name="Kurimoto M."/>
        </authorList>
    </citation>
    <scope>NUCLEOTIDE SEQUENCE [MRNA] (ISOFORM A)</scope>
    <scope>PROTEIN SEQUENCE OF 31-35; 39-45; 48-54; 57-60; 63-74; 91-95; 107-144 AND 151-169</scope>
    <scope>TISSUE SPECIFICITY</scope>
</reference>
<reference key="3">
    <citation type="journal article" date="1999" name="Virology">
        <title>Identification of human and mouse homologs of the MC51L-53L-54L family of secreted glycoproteins encoded by the Molluscum contagiosum poxvirus.</title>
        <authorList>
            <person name="Xiang Y."/>
            <person name="Moss B."/>
        </authorList>
    </citation>
    <scope>NUCLEOTIDE SEQUENCE [MRNA] (ISOFORM A)</scope>
</reference>
<reference key="4">
    <citation type="journal article" date="2000" name="Proc. Natl. Acad. Sci. U.S.A.">
        <title>Structural requirements of six naturally occurring isoforms of the IL-18 binding protein to inhibit IL-18.</title>
        <authorList>
            <person name="Kim S.-H."/>
            <person name="Eisenstein M."/>
            <person name="Reznikov L."/>
            <person name="Fantuzzi G."/>
            <person name="Novick D."/>
            <person name="Rubinstein M."/>
            <person name="Dinarello C.A."/>
        </authorList>
    </citation>
    <scope>NUCLEOTIDE SEQUENCE [MRNA] (ISOFORM D)</scope>
    <scope>FUNCTION</scope>
    <scope>ALTERNATIVE SPLICING (ISOFORMS A AND B)</scope>
    <source>
        <tissue>T-cell</tissue>
    </source>
</reference>
<reference key="5">
    <citation type="journal article" date="2004" name="Nat. Genet.">
        <title>Complete sequencing and characterization of 21,243 full-length human cDNAs.</title>
        <authorList>
            <person name="Ota T."/>
            <person name="Suzuki Y."/>
            <person name="Nishikawa T."/>
            <person name="Otsuki T."/>
            <person name="Sugiyama T."/>
            <person name="Irie R."/>
            <person name="Wakamatsu A."/>
            <person name="Hayashi K."/>
            <person name="Sato H."/>
            <person name="Nagai K."/>
            <person name="Kimura K."/>
            <person name="Makita H."/>
            <person name="Sekine M."/>
            <person name="Obayashi M."/>
            <person name="Nishi T."/>
            <person name="Shibahara T."/>
            <person name="Tanaka T."/>
            <person name="Ishii S."/>
            <person name="Yamamoto J."/>
            <person name="Saito K."/>
            <person name="Kawai Y."/>
            <person name="Isono Y."/>
            <person name="Nakamura Y."/>
            <person name="Nagahari K."/>
            <person name="Murakami K."/>
            <person name="Yasuda T."/>
            <person name="Iwayanagi T."/>
            <person name="Wagatsuma M."/>
            <person name="Shiratori A."/>
            <person name="Sudo H."/>
            <person name="Hosoiri T."/>
            <person name="Kaku Y."/>
            <person name="Kodaira H."/>
            <person name="Kondo H."/>
            <person name="Sugawara M."/>
            <person name="Takahashi M."/>
            <person name="Kanda K."/>
            <person name="Yokoi T."/>
            <person name="Furuya T."/>
            <person name="Kikkawa E."/>
            <person name="Omura Y."/>
            <person name="Abe K."/>
            <person name="Kamihara K."/>
            <person name="Katsuta N."/>
            <person name="Sato K."/>
            <person name="Tanikawa M."/>
            <person name="Yamazaki M."/>
            <person name="Ninomiya K."/>
            <person name="Ishibashi T."/>
            <person name="Yamashita H."/>
            <person name="Murakawa K."/>
            <person name="Fujimori K."/>
            <person name="Tanai H."/>
            <person name="Kimata M."/>
            <person name="Watanabe M."/>
            <person name="Hiraoka S."/>
            <person name="Chiba Y."/>
            <person name="Ishida S."/>
            <person name="Ono Y."/>
            <person name="Takiguchi S."/>
            <person name="Watanabe S."/>
            <person name="Yosida M."/>
            <person name="Hotuta T."/>
            <person name="Kusano J."/>
            <person name="Kanehori K."/>
            <person name="Takahashi-Fujii A."/>
            <person name="Hara H."/>
            <person name="Tanase T.-O."/>
            <person name="Nomura Y."/>
            <person name="Togiya S."/>
            <person name="Komai F."/>
            <person name="Hara R."/>
            <person name="Takeuchi K."/>
            <person name="Arita M."/>
            <person name="Imose N."/>
            <person name="Musashino K."/>
            <person name="Yuuki H."/>
            <person name="Oshima A."/>
            <person name="Sasaki N."/>
            <person name="Aotsuka S."/>
            <person name="Yoshikawa Y."/>
            <person name="Matsunawa H."/>
            <person name="Ichihara T."/>
            <person name="Shiohata N."/>
            <person name="Sano S."/>
            <person name="Moriya S."/>
            <person name="Momiyama H."/>
            <person name="Satoh N."/>
            <person name="Takami S."/>
            <person name="Terashima Y."/>
            <person name="Suzuki O."/>
            <person name="Nakagawa S."/>
            <person name="Senoh A."/>
            <person name="Mizoguchi H."/>
            <person name="Goto Y."/>
            <person name="Shimizu F."/>
            <person name="Wakebe H."/>
            <person name="Hishigaki H."/>
            <person name="Watanabe T."/>
            <person name="Sugiyama A."/>
            <person name="Takemoto M."/>
            <person name="Kawakami B."/>
            <person name="Yamazaki M."/>
            <person name="Watanabe K."/>
            <person name="Kumagai A."/>
            <person name="Itakura S."/>
            <person name="Fukuzumi Y."/>
            <person name="Fujimori Y."/>
            <person name="Komiyama M."/>
            <person name="Tashiro H."/>
            <person name="Tanigami A."/>
            <person name="Fujiwara T."/>
            <person name="Ono T."/>
            <person name="Yamada K."/>
            <person name="Fujii Y."/>
            <person name="Ozaki K."/>
            <person name="Hirao M."/>
            <person name="Ohmori Y."/>
            <person name="Kawabata A."/>
            <person name="Hikiji T."/>
            <person name="Kobatake N."/>
            <person name="Inagaki H."/>
            <person name="Ikema Y."/>
            <person name="Okamoto S."/>
            <person name="Okitani R."/>
            <person name="Kawakami T."/>
            <person name="Noguchi S."/>
            <person name="Itoh T."/>
            <person name="Shigeta K."/>
            <person name="Senba T."/>
            <person name="Matsumura K."/>
            <person name="Nakajima Y."/>
            <person name="Mizuno T."/>
            <person name="Morinaga M."/>
            <person name="Sasaki M."/>
            <person name="Togashi T."/>
            <person name="Oyama M."/>
            <person name="Hata H."/>
            <person name="Watanabe M."/>
            <person name="Komatsu T."/>
            <person name="Mizushima-Sugano J."/>
            <person name="Satoh T."/>
            <person name="Shirai Y."/>
            <person name="Takahashi Y."/>
            <person name="Nakagawa K."/>
            <person name="Okumura K."/>
            <person name="Nagase T."/>
            <person name="Nomura N."/>
            <person name="Kikuchi H."/>
            <person name="Masuho Y."/>
            <person name="Yamashita R."/>
            <person name="Nakai K."/>
            <person name="Yada T."/>
            <person name="Nakamura Y."/>
            <person name="Ohara O."/>
            <person name="Isogai T."/>
            <person name="Sugano S."/>
        </authorList>
    </citation>
    <scope>NUCLEOTIDE SEQUENCE [LARGE SCALE MRNA] (ISOFORM A)</scope>
    <source>
        <tissue>Uterus</tissue>
    </source>
</reference>
<reference key="6">
    <citation type="journal article" date="2006" name="Nature">
        <title>Human chromosome 11 DNA sequence and analysis including novel gene identification.</title>
        <authorList>
            <person name="Taylor T.D."/>
            <person name="Noguchi H."/>
            <person name="Totoki Y."/>
            <person name="Toyoda A."/>
            <person name="Kuroki Y."/>
            <person name="Dewar K."/>
            <person name="Lloyd C."/>
            <person name="Itoh T."/>
            <person name="Takeda T."/>
            <person name="Kim D.-W."/>
            <person name="She X."/>
            <person name="Barlow K.F."/>
            <person name="Bloom T."/>
            <person name="Bruford E."/>
            <person name="Chang J.L."/>
            <person name="Cuomo C.A."/>
            <person name="Eichler E."/>
            <person name="FitzGerald M.G."/>
            <person name="Jaffe D.B."/>
            <person name="LaButti K."/>
            <person name="Nicol R."/>
            <person name="Park H.-S."/>
            <person name="Seaman C."/>
            <person name="Sougnez C."/>
            <person name="Yang X."/>
            <person name="Zimmer A.R."/>
            <person name="Zody M.C."/>
            <person name="Birren B.W."/>
            <person name="Nusbaum C."/>
            <person name="Fujiyama A."/>
            <person name="Hattori M."/>
            <person name="Rogers J."/>
            <person name="Lander E.S."/>
            <person name="Sakaki Y."/>
        </authorList>
    </citation>
    <scope>NUCLEOTIDE SEQUENCE [LARGE SCALE GENOMIC DNA]</scope>
</reference>
<reference key="7">
    <citation type="submission" date="2005-07" db="EMBL/GenBank/DDBJ databases">
        <authorList>
            <person name="Mural R.J."/>
            <person name="Istrail S."/>
            <person name="Sutton G.G."/>
            <person name="Florea L."/>
            <person name="Halpern A.L."/>
            <person name="Mobarry C.M."/>
            <person name="Lippert R."/>
            <person name="Walenz B."/>
            <person name="Shatkay H."/>
            <person name="Dew I."/>
            <person name="Miller J.R."/>
            <person name="Flanigan M.J."/>
            <person name="Edwards N.J."/>
            <person name="Bolanos R."/>
            <person name="Fasulo D."/>
            <person name="Halldorsson B.V."/>
            <person name="Hannenhalli S."/>
            <person name="Turner R."/>
            <person name="Yooseph S."/>
            <person name="Lu F."/>
            <person name="Nusskern D.R."/>
            <person name="Shue B.C."/>
            <person name="Zheng X.H."/>
            <person name="Zhong F."/>
            <person name="Delcher A.L."/>
            <person name="Huson D.H."/>
            <person name="Kravitz S.A."/>
            <person name="Mouchard L."/>
            <person name="Reinert K."/>
            <person name="Remington K.A."/>
            <person name="Clark A.G."/>
            <person name="Waterman M.S."/>
            <person name="Eichler E.E."/>
            <person name="Adams M.D."/>
            <person name="Hunkapiller M.W."/>
            <person name="Myers E.W."/>
            <person name="Venter J.C."/>
        </authorList>
    </citation>
    <scope>NUCLEOTIDE SEQUENCE [LARGE SCALE GENOMIC DNA]</scope>
</reference>
<reference key="8">
    <citation type="journal article" date="2004" name="Genome Res.">
        <title>The status, quality, and expansion of the NIH full-length cDNA project: the Mammalian Gene Collection (MGC).</title>
        <authorList>
            <consortium name="The MGC Project Team"/>
        </authorList>
    </citation>
    <scope>NUCLEOTIDE SEQUENCE [LARGE SCALE MRNA] (ISOFORM A)</scope>
    <source>
        <tissue>Leukocyte</tissue>
    </source>
</reference>
<reference key="9">
    <citation type="journal article" date="2004" name="Protein Sci.">
        <title>Signal peptide prediction based on analysis of experimentally verified cleavage sites.</title>
        <authorList>
            <person name="Zhang Z."/>
            <person name="Henzel W.J."/>
        </authorList>
    </citation>
    <scope>PROTEIN SEQUENCE OF 31-45</scope>
</reference>
<reference key="10">
    <citation type="journal article" date="2012" name="Mol. Cell. Proteomics">
        <title>Human urinary glycoproteomics; attachment site specific analysis of N- and O-linked glycosylations by CID and ECD.</title>
        <authorList>
            <person name="Halim A."/>
            <person name="Nilsson J."/>
            <person name="Ruetschi U."/>
            <person name="Hesse C."/>
            <person name="Larson G."/>
        </authorList>
    </citation>
    <scope>GLYCOSYLATION AT SER-53; ASN-103 AND ASN-147</scope>
    <scope>STRUCTURE OF CARBOHYDRATES</scope>
    <scope>IDENTIFICATION BY MASS SPECTROMETRY</scope>
</reference>
<reference key="11">
    <citation type="journal article" date="2019" name="J. Exp. Med.">
        <title>Inherited IL-18BP deficiency in human fulminant viral hepatitis.</title>
        <authorList>
            <person name="Belkaya S."/>
            <person name="Michailidis E."/>
            <person name="Korol C.B."/>
            <person name="Kabbani M."/>
            <person name="Cobat A."/>
            <person name="Bastard P."/>
            <person name="Lee Y.S."/>
            <person name="Hernandez N."/>
            <person name="Drutman S."/>
            <person name="de Jong Y.P."/>
            <person name="Vivier E."/>
            <person name="Bruneau J."/>
            <person name="Beziat V."/>
            <person name="Boisson B."/>
            <person name="Lorenzo-Diaz L."/>
            <person name="Boucherit S."/>
            <person name="Sebagh M."/>
            <person name="Jacquemin E."/>
            <person name="Emile J.F."/>
            <person name="Abel L."/>
            <person name="Rice C.M."/>
            <person name="Jouanguy E."/>
            <person name="Casanova J.L."/>
        </authorList>
    </citation>
    <scope>FUNCTION</scope>
    <scope>SUBCELLULAR LOCATION</scope>
    <scope>INVOLVEMENT IN FVH</scope>
</reference>
<feature type="signal peptide" evidence="3 4 6">
    <location>
        <begin position="1"/>
        <end position="30"/>
    </location>
</feature>
<feature type="chain" id="PRO_0000014778" description="Interleukin-18-binding protein">
    <location>
        <begin position="31"/>
        <end position="194"/>
    </location>
</feature>
<feature type="domain" description="Ig-like C2-type">
    <location>
        <begin position="65"/>
        <end position="166"/>
    </location>
</feature>
<feature type="glycosylation site" description="O-linked (GalNAc...) serine" evidence="7">
    <location>
        <position position="53"/>
    </location>
</feature>
<feature type="glycosylation site" description="N-linked (GlcNAc...) asparagine" evidence="1">
    <location>
        <position position="79"/>
    </location>
</feature>
<feature type="glycosylation site" description="N-linked (GlcNAc...) asparagine" evidence="1">
    <location>
        <position position="94"/>
    </location>
</feature>
<feature type="glycosylation site" description="N-linked (GlcNAc...) (complex) asparagine" evidence="7">
    <location>
        <position position="103"/>
    </location>
</feature>
<feature type="glycosylation site" description="N-linked (GlcNAc...) (complex) asparagine" evidence="7">
    <location>
        <position position="147"/>
    </location>
</feature>
<feature type="disulfide bond" evidence="2">
    <location>
        <begin position="86"/>
        <end position="150"/>
    </location>
</feature>
<feature type="splice variant" id="VSP_002515" description="In isoform B." evidence="9">
    <original>NGTLSLSCVACSRFPNFSILYWLGNGSFIEHLPGRLW</original>
    <variation>SWAEGNLAPHPRSPALQPQQSTAAGLRLSTGPAAAQP</variation>
    <location>
        <begin position="79"/>
        <end position="115"/>
    </location>
</feature>
<feature type="splice variant" id="VSP_002516" description="In isoform B." evidence="9">
    <location>
        <begin position="116"/>
        <end position="194"/>
    </location>
</feature>
<feature type="splice variant" id="VSP_037605" description="In isoform D." evidence="10">
    <original>TQLCKALVLEQLTPALHSTNFSCVLVDPEQVVQRHV</original>
    <variation>WAEGNLAPHPRSPALQPQQSTAAGLRLSTGPAAAQP</variation>
    <location>
        <begin position="128"/>
        <end position="163"/>
    </location>
</feature>
<feature type="splice variant" id="VSP_037606" description="In isoform D." evidence="10">
    <location>
        <begin position="164"/>
        <end position="194"/>
    </location>
</feature>
<feature type="sequence variant" id="VAR_059393" description="In dbSNP:rs5743672.">
    <original>R</original>
    <variation>H</variation>
    <location>
        <position position="91"/>
    </location>
</feature>
<feature type="sequence variant" id="VAR_024497" description="In dbSNP:rs5743673.">
    <original>R</original>
    <variation>Q</variation>
    <location>
        <position position="121"/>
    </location>
</feature>
<feature type="strand" evidence="12">
    <location>
        <begin position="65"/>
        <end position="70"/>
    </location>
</feature>
<feature type="strand" evidence="12">
    <location>
        <begin position="82"/>
        <end position="91"/>
    </location>
</feature>
<feature type="strand" evidence="12">
    <location>
        <begin position="93"/>
        <end position="95"/>
    </location>
</feature>
<feature type="strand" evidence="12">
    <location>
        <begin position="97"/>
        <end position="102"/>
    </location>
</feature>
<feature type="helix" evidence="12">
    <location>
        <begin position="107"/>
        <end position="109"/>
    </location>
</feature>
<feature type="strand" evidence="12">
    <location>
        <begin position="110"/>
        <end position="116"/>
    </location>
</feature>
<feature type="strand" evidence="12">
    <location>
        <begin position="120"/>
        <end position="123"/>
    </location>
</feature>
<feature type="strand" evidence="12">
    <location>
        <begin position="125"/>
        <end position="138"/>
    </location>
</feature>
<feature type="helix" evidence="12">
    <location>
        <begin position="141"/>
        <end position="144"/>
    </location>
</feature>
<feature type="strand" evidence="12">
    <location>
        <begin position="147"/>
        <end position="153"/>
    </location>
</feature>
<feature type="strand" evidence="12">
    <location>
        <begin position="158"/>
        <end position="164"/>
    </location>
</feature>
<feature type="helix" evidence="12">
    <location>
        <begin position="165"/>
        <end position="169"/>
    </location>
</feature>
<organism>
    <name type="scientific">Homo sapiens</name>
    <name type="common">Human</name>
    <dbReference type="NCBI Taxonomy" id="9606"/>
    <lineage>
        <taxon>Eukaryota</taxon>
        <taxon>Metazoa</taxon>
        <taxon>Chordata</taxon>
        <taxon>Craniata</taxon>
        <taxon>Vertebrata</taxon>
        <taxon>Euteleostomi</taxon>
        <taxon>Mammalia</taxon>
        <taxon>Eutheria</taxon>
        <taxon>Euarchontoglires</taxon>
        <taxon>Primates</taxon>
        <taxon>Haplorrhini</taxon>
        <taxon>Catarrhini</taxon>
        <taxon>Hominidae</taxon>
        <taxon>Homo</taxon>
    </lineage>
</organism>
<proteinExistence type="evidence at protein level"/>
<comment type="function">
    <text evidence="3 5 8">Isoform A binds to IL-18 and inhibits its activity. Functions as an inhibitor of the early TH1 cytokine response.</text>
</comment>
<comment type="subcellular location">
    <subcellularLocation>
        <location evidence="8">Secreted</location>
    </subcellularLocation>
</comment>
<comment type="alternative products">
    <event type="alternative splicing"/>
    <isoform>
        <id>O95998-2</id>
        <name>A</name>
        <name>IL-18BPA</name>
        <sequence type="displayed"/>
    </isoform>
    <isoform>
        <id>O95998-3</id>
        <name>B</name>
        <name>IL-18BPB</name>
        <sequence type="described" ref="VSP_002515 VSP_002516"/>
    </isoform>
    <isoform>
        <id>O95998-4</id>
        <name>D</name>
        <name>IL-18BPD</name>
        <sequence type="described" ref="VSP_037605 VSP_037606"/>
    </isoform>
</comment>
<comment type="tissue specificity">
    <text evidence="3 4">Strongly expressed in heart, lung, placenta and spleen.</text>
</comment>
<comment type="PTM">
    <text evidence="7">N- and O-glycosylated. O-glycosylated with core 1-like and core 2-like glycans. O-glycan heterogeneity at Ser-53: HexHexNAc (major) and Hex2HexNAc2 (minor). N-glycan heterogeneity at Asn-103: Hex5HexNAc4 (minor), dHex1Hex5HexNAc4 (major) and Hex6HexNAc5 (minor); N-glycan at Asn-147: dHex1Hex5HexNAc4.</text>
</comment>
<comment type="disease" evidence="8">
    <disease id="DI-05641">
        <name>Hepatitis, fulminant viral</name>
        <acronym>FVH</acronym>
        <description>An autosomal recessive form of fulminant viral hepatitis, a disease that strikes otherwise healthy individuals during primary infection with common liver-tropic viruses. FVH is characterized by severe liver destruction in the absence of a preexisting liver disorder, leading to encephalopathy within 8 weeks of the onset of the first symptoms.</description>
        <dbReference type="MIM" id="618549"/>
    </disease>
    <text>Disease susceptibility may be associated with variants affecting the gene represented in this entry.</text>
</comment>
<comment type="sequence caution" evidence="11">
    <conflict type="erroneous initiation">
        <sequence resource="EMBL-CDS" id="AAD17187"/>
    </conflict>
    <text>Truncated N-terminus.</text>
</comment>
<comment type="sequence caution" evidence="11">
    <conflict type="erroneous initiation">
        <sequence resource="EMBL-CDS" id="AAD17188"/>
    </conflict>
    <text>Truncated N-terminus.</text>
</comment>
<comment type="sequence caution" evidence="11">
    <conflict type="miscellaneous discrepancy">
        <sequence resource="EMBL-CDS" id="AAD17189"/>
    </conflict>
    <text>Intron retention.</text>
</comment>
<comment type="sequence caution" evidence="11">
    <conflict type="erroneous initiation">
        <sequence resource="EMBL-CDS" id="AAD17190"/>
    </conflict>
    <text>Truncated N-terminus.</text>
</comment>
<comment type="sequence caution" evidence="11">
    <conflict type="erroneous initiation">
        <sequence resource="EMBL-CDS" id="AAD17191"/>
    </conflict>
    <text>Truncated N-terminus.</text>
</comment>
<comment type="sequence caution" evidence="11">
    <conflict type="miscellaneous discrepancy">
        <sequence resource="EMBL-CDS" id="AAD17192"/>
    </conflict>
    <text>Intron retention.</text>
</comment>
<comment type="sequence caution" evidence="11">
    <conflict type="erroneous initiation">
        <sequence resource="EMBL-CDS" id="AAF31697"/>
    </conflict>
    <text>Truncated N-terminus.</text>
</comment>
<dbReference type="EMBL" id="AF110798">
    <property type="protein sequence ID" value="AAD17187.1"/>
    <property type="status" value="ALT_INIT"/>
    <property type="molecule type" value="Genomic_DNA"/>
</dbReference>
<dbReference type="EMBL" id="AF110798">
    <property type="protein sequence ID" value="AAD17188.1"/>
    <property type="status" value="ALT_INIT"/>
    <property type="molecule type" value="Genomic_DNA"/>
</dbReference>
<dbReference type="EMBL" id="AF110798">
    <property type="protein sequence ID" value="AAD17189.1"/>
    <property type="status" value="ALT_SEQ"/>
    <property type="molecule type" value="Genomic_DNA"/>
</dbReference>
<dbReference type="EMBL" id="AF110799">
    <property type="protein sequence ID" value="AAD17190.1"/>
    <property type="status" value="ALT_INIT"/>
    <property type="molecule type" value="mRNA"/>
</dbReference>
<dbReference type="EMBL" id="AF110800">
    <property type="protein sequence ID" value="AAD17191.1"/>
    <property type="status" value="ALT_INIT"/>
    <property type="molecule type" value="mRNA"/>
</dbReference>
<dbReference type="EMBL" id="AF110801">
    <property type="protein sequence ID" value="AAD17192.1"/>
    <property type="status" value="ALT_SEQ"/>
    <property type="molecule type" value="mRNA"/>
</dbReference>
<dbReference type="EMBL" id="AB019504">
    <property type="protein sequence ID" value="BAA76374.1"/>
    <property type="molecule type" value="mRNA"/>
</dbReference>
<dbReference type="EMBL" id="AF122906">
    <property type="protein sequence ID" value="AAD41051.1"/>
    <property type="molecule type" value="mRNA"/>
</dbReference>
<dbReference type="EMBL" id="AF215907">
    <property type="protein sequence ID" value="AAF31697.1"/>
    <property type="status" value="ALT_INIT"/>
    <property type="molecule type" value="mRNA"/>
</dbReference>
<dbReference type="EMBL" id="AK098255">
    <property type="protein sequence ID" value="BAG53602.1"/>
    <property type="molecule type" value="mRNA"/>
</dbReference>
<dbReference type="EMBL" id="AP002490">
    <property type="status" value="NOT_ANNOTATED_CDS"/>
    <property type="molecule type" value="Genomic_DNA"/>
</dbReference>
<dbReference type="EMBL" id="CH471076">
    <property type="protein sequence ID" value="EAW74813.1"/>
    <property type="molecule type" value="Genomic_DNA"/>
</dbReference>
<dbReference type="EMBL" id="CH471076">
    <property type="protein sequence ID" value="EAW74816.1"/>
    <property type="molecule type" value="Genomic_DNA"/>
</dbReference>
<dbReference type="EMBL" id="BC044215">
    <property type="protein sequence ID" value="AAH44215.1"/>
    <property type="molecule type" value="mRNA"/>
</dbReference>
<dbReference type="CCDS" id="CCDS44666.1">
    <molecule id="O95998-3"/>
</dbReference>
<dbReference type="CCDS" id="CCDS8205.1">
    <molecule id="O95998-4"/>
</dbReference>
<dbReference type="CCDS" id="CCDS8206.2">
    <molecule id="O95998-2"/>
</dbReference>
<dbReference type="RefSeq" id="NP_001034748.1">
    <molecule id="O95998-2"/>
    <property type="nucleotide sequence ID" value="NM_001039659.2"/>
</dbReference>
<dbReference type="RefSeq" id="NP_001034749.1">
    <molecule id="O95998-2"/>
    <property type="nucleotide sequence ID" value="NM_001039660.2"/>
</dbReference>
<dbReference type="RefSeq" id="NP_001138527.1">
    <molecule id="O95998-3"/>
    <property type="nucleotide sequence ID" value="NM_001145055.1"/>
</dbReference>
<dbReference type="RefSeq" id="NP_001138529.1">
    <molecule id="O95998-2"/>
    <property type="nucleotide sequence ID" value="NM_001145057.1"/>
</dbReference>
<dbReference type="RefSeq" id="NP_005690.2">
    <property type="nucleotide sequence ID" value="NM_005699.3"/>
</dbReference>
<dbReference type="RefSeq" id="NP_766630.2">
    <molecule id="O95998-2"/>
    <property type="nucleotide sequence ID" value="NM_173042.2"/>
</dbReference>
<dbReference type="RefSeq" id="NP_766632.2">
    <molecule id="O95998-4"/>
    <property type="nucleotide sequence ID" value="NM_173044.3"/>
</dbReference>
<dbReference type="RefSeq" id="XP_016872548.1">
    <molecule id="O95998-2"/>
    <property type="nucleotide sequence ID" value="XM_017017059.2"/>
</dbReference>
<dbReference type="RefSeq" id="XP_016872549.1">
    <property type="nucleotide sequence ID" value="XM_017017060.1"/>
</dbReference>
<dbReference type="RefSeq" id="XP_016872550.1">
    <molecule id="O95998-2"/>
    <property type="nucleotide sequence ID" value="XM_017017061.3"/>
</dbReference>
<dbReference type="RefSeq" id="XP_016872551.1">
    <property type="nucleotide sequence ID" value="XM_017017062.1"/>
</dbReference>
<dbReference type="RefSeq" id="XP_016872552.1">
    <molecule id="O95998-2"/>
    <property type="nucleotide sequence ID" value="XM_017017063.2"/>
</dbReference>
<dbReference type="RefSeq" id="XP_024304071.1">
    <molecule id="O95998-2"/>
    <property type="nucleotide sequence ID" value="XM_024448303.2"/>
</dbReference>
<dbReference type="RefSeq" id="XP_024304072.1">
    <molecule id="O95998-2"/>
    <property type="nucleotide sequence ID" value="XM_024448304.2"/>
</dbReference>
<dbReference type="RefSeq" id="XP_047282159.1">
    <molecule id="O95998-2"/>
    <property type="nucleotide sequence ID" value="XM_047426203.1"/>
</dbReference>
<dbReference type="RefSeq" id="XP_047282160.1">
    <molecule id="O95998-2"/>
    <property type="nucleotide sequence ID" value="XM_047426204.1"/>
</dbReference>
<dbReference type="RefSeq" id="XP_047282161.1">
    <molecule id="O95998-2"/>
    <property type="nucleotide sequence ID" value="XM_047426205.1"/>
</dbReference>
<dbReference type="RefSeq" id="XP_047282162.1">
    <molecule id="O95998-2"/>
    <property type="nucleotide sequence ID" value="XM_047426206.1"/>
</dbReference>
<dbReference type="RefSeq" id="XP_047282163.1">
    <molecule id="O95998-2"/>
    <property type="nucleotide sequence ID" value="XM_047426207.1"/>
</dbReference>
<dbReference type="RefSeq" id="XP_047282164.1">
    <molecule id="O95998-2"/>
    <property type="nucleotide sequence ID" value="XM_047426208.1"/>
</dbReference>
<dbReference type="RefSeq" id="XP_054223360.1">
    <molecule id="O95998-2"/>
    <property type="nucleotide sequence ID" value="XM_054367385.1"/>
</dbReference>
<dbReference type="RefSeq" id="XP_054223361.1">
    <molecule id="O95998-2"/>
    <property type="nucleotide sequence ID" value="XM_054367386.1"/>
</dbReference>
<dbReference type="RefSeq" id="XP_054223362.1">
    <molecule id="O95998-2"/>
    <property type="nucleotide sequence ID" value="XM_054367387.1"/>
</dbReference>
<dbReference type="RefSeq" id="XP_054223363.1">
    <molecule id="O95998-2"/>
    <property type="nucleotide sequence ID" value="XM_054367388.1"/>
</dbReference>
<dbReference type="RefSeq" id="XP_054223364.1">
    <molecule id="O95998-2"/>
    <property type="nucleotide sequence ID" value="XM_054367389.1"/>
</dbReference>
<dbReference type="RefSeq" id="XP_054223365.1">
    <molecule id="O95998-2"/>
    <property type="nucleotide sequence ID" value="XM_054367390.1"/>
</dbReference>
<dbReference type="RefSeq" id="XP_054223366.1">
    <molecule id="O95998-2"/>
    <property type="nucleotide sequence ID" value="XM_054367391.1"/>
</dbReference>
<dbReference type="RefSeq" id="XP_054223367.1">
    <molecule id="O95998-2"/>
    <property type="nucleotide sequence ID" value="XM_054367392.1"/>
</dbReference>
<dbReference type="RefSeq" id="XP_054223368.1">
    <molecule id="O95998-2"/>
    <property type="nucleotide sequence ID" value="XM_054367393.1"/>
</dbReference>
<dbReference type="RefSeq" id="XP_054223369.1">
    <molecule id="O95998-2"/>
    <property type="nucleotide sequence ID" value="XM_054367394.1"/>
</dbReference>
<dbReference type="PDB" id="7AL7">
    <property type="method" value="X-ray"/>
    <property type="resolution" value="1.80 A"/>
    <property type="chains" value="A=63-194"/>
</dbReference>
<dbReference type="PDBsum" id="7AL7"/>
<dbReference type="SMR" id="O95998"/>
<dbReference type="BioGRID" id="115379">
    <property type="interactions" value="1"/>
</dbReference>
<dbReference type="ComplexPortal" id="CPX-10101">
    <property type="entry name" value="Interleukin-18 decoy complex"/>
</dbReference>
<dbReference type="FunCoup" id="O95998">
    <property type="interactions" value="87"/>
</dbReference>
<dbReference type="IntAct" id="O95998">
    <property type="interactions" value="3"/>
</dbReference>
<dbReference type="STRING" id="9606.ENSP00000434717"/>
<dbReference type="GlyConnect" id="669">
    <property type="glycosylation" value="4 N-Linked glycans (2 sites), 2 O-Linked glycans (1 site)"/>
</dbReference>
<dbReference type="GlyCosmos" id="O95998">
    <property type="glycosylation" value="7 sites, 11 glycans"/>
</dbReference>
<dbReference type="GlyGen" id="O95998">
    <property type="glycosylation" value="8 sites, 7 N-linked glycans (2 sites), 6 O-linked glycans (4 sites)"/>
</dbReference>
<dbReference type="iPTMnet" id="O95998"/>
<dbReference type="PhosphoSitePlus" id="O95998"/>
<dbReference type="BioMuta" id="IL18BP"/>
<dbReference type="MassIVE" id="O95998"/>
<dbReference type="PaxDb" id="9606-ENSP00000384212"/>
<dbReference type="PeptideAtlas" id="O95998"/>
<dbReference type="ProteomicsDB" id="51175">
    <molecule id="O95998-2"/>
</dbReference>
<dbReference type="ProteomicsDB" id="51176">
    <molecule id="O95998-3"/>
</dbReference>
<dbReference type="ProteomicsDB" id="51177">
    <molecule id="O95998-4"/>
</dbReference>
<dbReference type="Antibodypedia" id="30767">
    <property type="antibodies" value="473 antibodies from 34 providers"/>
</dbReference>
<dbReference type="DNASU" id="10068"/>
<dbReference type="Ensembl" id="ENST00000337131.9">
    <molecule id="O95998-2"/>
    <property type="protein sequence ID" value="ENSP00000338723.5"/>
    <property type="gene ID" value="ENSG00000137496.19"/>
</dbReference>
<dbReference type="Ensembl" id="ENST00000343898.9">
    <molecule id="O95998-4"/>
    <property type="protein sequence ID" value="ENSP00000343309.5"/>
    <property type="gene ID" value="ENSG00000137496.19"/>
</dbReference>
<dbReference type="Ensembl" id="ENST00000393703.9">
    <molecule id="O95998-2"/>
    <property type="protein sequence ID" value="ENSP00000377306.4"/>
    <property type="gene ID" value="ENSG00000137496.19"/>
</dbReference>
<dbReference type="Ensembl" id="ENST00000393705.8">
    <molecule id="O95998-2"/>
    <property type="protein sequence ID" value="ENSP00000377308.4"/>
    <property type="gene ID" value="ENSG00000137496.19"/>
</dbReference>
<dbReference type="Ensembl" id="ENST00000393707.4">
    <molecule id="O95998-3"/>
    <property type="protein sequence ID" value="ENSP00000377310.4"/>
    <property type="gene ID" value="ENSG00000137496.19"/>
</dbReference>
<dbReference type="Ensembl" id="ENST00000404792.5">
    <molecule id="O95998-2"/>
    <property type="protein sequence ID" value="ENSP00000384212.1"/>
    <property type="gene ID" value="ENSG00000137496.19"/>
</dbReference>
<dbReference type="Ensembl" id="ENST00000534583.5">
    <molecule id="O95998-2"/>
    <property type="protein sequence ID" value="ENSP00000434376.1"/>
    <property type="gene ID" value="ENSG00000137496.19"/>
</dbReference>
<dbReference type="Ensembl" id="ENST00000620017.4">
    <molecule id="O95998-4"/>
    <property type="protein sequence ID" value="ENSP00000480621.1"/>
    <property type="gene ID" value="ENSG00000137496.19"/>
</dbReference>
<dbReference type="Ensembl" id="ENST00000698837.1">
    <molecule id="O95998-2"/>
    <property type="protein sequence ID" value="ENSP00000513973.1"/>
    <property type="gene ID" value="ENSG00000137496.19"/>
</dbReference>
<dbReference type="Ensembl" id="ENST00000698838.1">
    <molecule id="O95998-2"/>
    <property type="protein sequence ID" value="ENSP00000513974.1"/>
    <property type="gene ID" value="ENSG00000137496.19"/>
</dbReference>
<dbReference type="Ensembl" id="ENST00000698839.1">
    <molecule id="O95998-2"/>
    <property type="protein sequence ID" value="ENSP00000513975.1"/>
    <property type="gene ID" value="ENSG00000137496.19"/>
</dbReference>
<dbReference type="Ensembl" id="ENST00000698840.1">
    <molecule id="O95998-2"/>
    <property type="protein sequence ID" value="ENSP00000513976.1"/>
    <property type="gene ID" value="ENSG00000137496.19"/>
</dbReference>
<dbReference type="GeneID" id="10068"/>
<dbReference type="KEGG" id="hsa:10068"/>
<dbReference type="MANE-Select" id="ENST00000393703.9">
    <property type="protein sequence ID" value="ENSP00000377306.4"/>
    <property type="RefSeq nucleotide sequence ID" value="NM_001039660.2"/>
    <property type="RefSeq protein sequence ID" value="NP_001034749.1"/>
</dbReference>
<dbReference type="UCSC" id="uc001ore.2">
    <molecule id="O95998-2"/>
    <property type="organism name" value="human"/>
</dbReference>
<dbReference type="AGR" id="HGNC:5987"/>
<dbReference type="CTD" id="10068"/>
<dbReference type="DisGeNET" id="10068"/>
<dbReference type="GeneCards" id="IL18BP"/>
<dbReference type="HGNC" id="HGNC:5987">
    <property type="gene designation" value="IL18BP"/>
</dbReference>
<dbReference type="HPA" id="ENSG00000137496">
    <property type="expression patterns" value="Tissue enhanced (lymphoid)"/>
</dbReference>
<dbReference type="MalaCards" id="IL18BP"/>
<dbReference type="MIM" id="604113">
    <property type="type" value="gene"/>
</dbReference>
<dbReference type="MIM" id="618549">
    <property type="type" value="phenotype"/>
</dbReference>
<dbReference type="neXtProt" id="NX_O95998"/>
<dbReference type="OpenTargets" id="ENSG00000137496"/>
<dbReference type="PharmGKB" id="PA29803"/>
<dbReference type="VEuPathDB" id="HostDB:ENSG00000137496"/>
<dbReference type="eggNOG" id="ENOG502SYZY">
    <property type="taxonomic scope" value="Eukaryota"/>
</dbReference>
<dbReference type="GeneTree" id="ENSGT00390000004026"/>
<dbReference type="HOGENOM" id="CLU_131866_0_0_1"/>
<dbReference type="InParanoid" id="O95998"/>
<dbReference type="OMA" id="PTAKQCP"/>
<dbReference type="OrthoDB" id="9904367at2759"/>
<dbReference type="PAN-GO" id="O95998">
    <property type="GO annotations" value="3 GO annotations based on evolutionary models"/>
</dbReference>
<dbReference type="PhylomeDB" id="O95998"/>
<dbReference type="TreeFam" id="TF337962"/>
<dbReference type="PathwayCommons" id="O95998"/>
<dbReference type="Reactome" id="R-HSA-9008059">
    <property type="pathway name" value="Interleukin-37 signaling"/>
</dbReference>
<dbReference type="Reactome" id="R-HSA-9012546">
    <property type="pathway name" value="Interleukin-18 signaling"/>
</dbReference>
<dbReference type="SignaLink" id="O95998"/>
<dbReference type="BioGRID-ORCS" id="10068">
    <property type="hits" value="14 hits in 1159 CRISPR screens"/>
</dbReference>
<dbReference type="ChiTaRS" id="IL18BP">
    <property type="organism name" value="human"/>
</dbReference>
<dbReference type="GeneWiki" id="IL18BP"/>
<dbReference type="GenomeRNAi" id="10068"/>
<dbReference type="Pharos" id="O95998">
    <property type="development level" value="Tbio"/>
</dbReference>
<dbReference type="PRO" id="PR:O95998"/>
<dbReference type="Proteomes" id="UP000005640">
    <property type="component" value="Chromosome 11"/>
</dbReference>
<dbReference type="RNAct" id="O95998">
    <property type="molecule type" value="protein"/>
</dbReference>
<dbReference type="Bgee" id="ENSG00000137496">
    <property type="expression patterns" value="Expressed in spleen and 119 other cell types or tissues"/>
</dbReference>
<dbReference type="ExpressionAtlas" id="O95998">
    <property type="expression patterns" value="baseline and differential"/>
</dbReference>
<dbReference type="GO" id="GO:0070062">
    <property type="term" value="C:extracellular exosome"/>
    <property type="evidence" value="ECO:0007005"/>
    <property type="project" value="UniProtKB"/>
</dbReference>
<dbReference type="GO" id="GO:0005576">
    <property type="term" value="C:extracellular region"/>
    <property type="evidence" value="ECO:0000304"/>
    <property type="project" value="UniProtKB"/>
</dbReference>
<dbReference type="GO" id="GO:0005615">
    <property type="term" value="C:extracellular space"/>
    <property type="evidence" value="ECO:0000318"/>
    <property type="project" value="GO_Central"/>
</dbReference>
<dbReference type="GO" id="GO:0042007">
    <property type="term" value="F:interleukin-18 binding"/>
    <property type="evidence" value="ECO:0000314"/>
    <property type="project" value="UniProtKB"/>
</dbReference>
<dbReference type="GO" id="GO:0048019">
    <property type="term" value="F:receptor antagonist activity"/>
    <property type="evidence" value="ECO:0000304"/>
    <property type="project" value="UniProtKB"/>
</dbReference>
<dbReference type="GO" id="GO:0070301">
    <property type="term" value="P:cellular response to hydrogen peroxide"/>
    <property type="evidence" value="ECO:0007669"/>
    <property type="project" value="Ensembl"/>
</dbReference>
<dbReference type="GO" id="GO:0071356">
    <property type="term" value="P:cellular response to tumor necrosis factor"/>
    <property type="evidence" value="ECO:0007669"/>
    <property type="project" value="Ensembl"/>
</dbReference>
<dbReference type="GO" id="GO:0032496">
    <property type="term" value="P:response to lipopolysaccharide"/>
    <property type="evidence" value="ECO:0007669"/>
    <property type="project" value="Ensembl"/>
</dbReference>
<dbReference type="GO" id="GO:0042088">
    <property type="term" value="P:T-helper 1 type immune response"/>
    <property type="evidence" value="ECO:0000314"/>
    <property type="project" value="UniProtKB"/>
</dbReference>
<dbReference type="FunFam" id="2.60.40.10:FF:001297">
    <property type="entry name" value="Interleukin 18 binding protein"/>
    <property type="match status" value="1"/>
</dbReference>
<dbReference type="Gene3D" id="2.60.40.10">
    <property type="entry name" value="Immunoglobulins"/>
    <property type="match status" value="1"/>
</dbReference>
<dbReference type="InterPro" id="IPR007110">
    <property type="entry name" value="Ig-like_dom"/>
</dbReference>
<dbReference type="InterPro" id="IPR036179">
    <property type="entry name" value="Ig-like_dom_sf"/>
</dbReference>
<dbReference type="InterPro" id="IPR013783">
    <property type="entry name" value="Ig-like_fold"/>
</dbReference>
<dbReference type="InterPro" id="IPR039681">
    <property type="entry name" value="IL18BP"/>
</dbReference>
<dbReference type="InterPro" id="IPR055139">
    <property type="entry name" value="IL18BP-like_dom"/>
</dbReference>
<dbReference type="PANTHER" id="PTHR14292">
    <property type="entry name" value="INTERLEUKIN-18-BINDING PROTEIN"/>
    <property type="match status" value="1"/>
</dbReference>
<dbReference type="PANTHER" id="PTHR14292:SF2">
    <property type="entry name" value="INTERLEUKIN-18-BINDING PROTEIN"/>
    <property type="match status" value="1"/>
</dbReference>
<dbReference type="Pfam" id="PF22009">
    <property type="entry name" value="YLDV-IL18BP-like"/>
    <property type="match status" value="1"/>
</dbReference>
<dbReference type="SUPFAM" id="SSF48726">
    <property type="entry name" value="Immunoglobulin"/>
    <property type="match status" value="1"/>
</dbReference>
<dbReference type="PROSITE" id="PS50835">
    <property type="entry name" value="IG_LIKE"/>
    <property type="match status" value="1"/>
</dbReference>
<gene>
    <name type="primary">IL18BP</name>
</gene>
<evidence type="ECO:0000255" key="1"/>
<evidence type="ECO:0000255" key="2">
    <source>
        <dbReference type="PROSITE-ProRule" id="PRU00114"/>
    </source>
</evidence>
<evidence type="ECO:0000269" key="3">
    <source>
    </source>
</evidence>
<evidence type="ECO:0000269" key="4">
    <source>
    </source>
</evidence>
<evidence type="ECO:0000269" key="5">
    <source>
    </source>
</evidence>
<evidence type="ECO:0000269" key="6">
    <source>
    </source>
</evidence>
<evidence type="ECO:0000269" key="7">
    <source>
    </source>
</evidence>
<evidence type="ECO:0000269" key="8">
    <source>
    </source>
</evidence>
<evidence type="ECO:0000303" key="9">
    <source>
    </source>
</evidence>
<evidence type="ECO:0000303" key="10">
    <source>
    </source>
</evidence>
<evidence type="ECO:0000305" key="11"/>
<evidence type="ECO:0007829" key="12">
    <source>
        <dbReference type="PDB" id="7AL7"/>
    </source>
</evidence>
<protein>
    <recommendedName>
        <fullName>Interleukin-18-binding protein</fullName>
        <shortName>IL-18BP</shortName>
    </recommendedName>
    <alternativeName>
        <fullName>Tadekinig-alfa</fullName>
    </alternativeName>
</protein>
<sequence length="194" mass="21099">MTMRHNWTPDLSPLWVLLLCAHVVTLLVRATPVSQTTTAATASVRSTKDPCPSQPPVFPAAKQCPALEVTWPEVEVPLNGTLSLSCVACSRFPNFSILYWLGNGSFIEHLPGRLWEGSTSRERGSTGTQLCKALVLEQLTPALHSTNFSCVLVDPEQVVQRHVVLAQLWAGLRATLPPTQEALPSSHSSPQQQG</sequence>
<name>I18BP_HUMAN</name>
<keyword id="KW-0002">3D-structure</keyword>
<keyword id="KW-0025">Alternative splicing</keyword>
<keyword id="KW-0903">Direct protein sequencing</keyword>
<keyword id="KW-1015">Disulfide bond</keyword>
<keyword id="KW-0325">Glycoprotein</keyword>
<keyword id="KW-0393">Immunoglobulin domain</keyword>
<keyword id="KW-1267">Proteomics identification</keyword>
<keyword id="KW-1185">Reference proteome</keyword>
<keyword id="KW-0964">Secreted</keyword>
<keyword id="KW-0732">Signal</keyword>
<accession>O95998</accession>
<accession>B3KUZ0</accession>
<accession>B7WPK4</accession>
<accession>O95993</accession>
<accession>O96027</accession>
<accession>Q9NZA9</accession>
<accession>Q9UBR7</accession>